<dbReference type="EMBL" id="AF041421">
    <property type="protein sequence ID" value="AAB96785.1"/>
    <property type="molecule type" value="mRNA"/>
</dbReference>
<dbReference type="RefSeq" id="NP_001076119.1">
    <property type="nucleotide sequence ID" value="NM_001082650.1"/>
</dbReference>
<dbReference type="SMR" id="O46564"/>
<dbReference type="FunCoup" id="O46564">
    <property type="interactions" value="71"/>
</dbReference>
<dbReference type="STRING" id="9986.ENSOCUP00000010036"/>
<dbReference type="GlyCosmos" id="O46564">
    <property type="glycosylation" value="3 sites, No reported glycans"/>
</dbReference>
<dbReference type="PaxDb" id="9986-ENSOCUP00000010036"/>
<dbReference type="GeneID" id="100009349"/>
<dbReference type="KEGG" id="ocu:100009349"/>
<dbReference type="CTD" id="650"/>
<dbReference type="eggNOG" id="KOG3900">
    <property type="taxonomic scope" value="Eukaryota"/>
</dbReference>
<dbReference type="InParanoid" id="O46564"/>
<dbReference type="OrthoDB" id="5987191at2759"/>
<dbReference type="Proteomes" id="UP000001811">
    <property type="component" value="Unplaced"/>
</dbReference>
<dbReference type="GO" id="GO:0009986">
    <property type="term" value="C:cell surface"/>
    <property type="evidence" value="ECO:0000250"/>
    <property type="project" value="UniProtKB"/>
</dbReference>
<dbReference type="GO" id="GO:0005615">
    <property type="term" value="C:extracellular space"/>
    <property type="evidence" value="ECO:0007669"/>
    <property type="project" value="UniProtKB-KW"/>
</dbReference>
<dbReference type="GO" id="GO:0070700">
    <property type="term" value="F:BMP receptor binding"/>
    <property type="evidence" value="ECO:0000250"/>
    <property type="project" value="UniProtKB"/>
</dbReference>
<dbReference type="GO" id="GO:0005125">
    <property type="term" value="F:cytokine activity"/>
    <property type="evidence" value="ECO:0007669"/>
    <property type="project" value="UniProtKB-KW"/>
</dbReference>
<dbReference type="GO" id="GO:0008083">
    <property type="term" value="F:growth factor activity"/>
    <property type="evidence" value="ECO:0007669"/>
    <property type="project" value="UniProtKB-KW"/>
</dbReference>
<dbReference type="GO" id="GO:0019211">
    <property type="term" value="F:phosphatase activator activity"/>
    <property type="evidence" value="ECO:0000250"/>
    <property type="project" value="UniProtKB"/>
</dbReference>
<dbReference type="GO" id="GO:0030509">
    <property type="term" value="P:BMP signaling pathway"/>
    <property type="evidence" value="ECO:0000250"/>
    <property type="project" value="UniProtKB"/>
</dbReference>
<dbReference type="GO" id="GO:0060317">
    <property type="term" value="P:cardiac epithelial to mesenchymal transition"/>
    <property type="evidence" value="ECO:0000250"/>
    <property type="project" value="UniProtKB"/>
</dbReference>
<dbReference type="GO" id="GO:0035051">
    <property type="term" value="P:cardiocyte differentiation"/>
    <property type="evidence" value="ECO:0000250"/>
    <property type="project" value="UniProtKB"/>
</dbReference>
<dbReference type="GO" id="GO:0051216">
    <property type="term" value="P:cartilage development"/>
    <property type="evidence" value="ECO:0007669"/>
    <property type="project" value="UniProtKB-KW"/>
</dbReference>
<dbReference type="GO" id="GO:0001837">
    <property type="term" value="P:epithelial to mesenchymal transition"/>
    <property type="evidence" value="ECO:0000250"/>
    <property type="project" value="UniProtKB"/>
</dbReference>
<dbReference type="GO" id="GO:0007507">
    <property type="term" value="P:heart development"/>
    <property type="evidence" value="ECO:0000250"/>
    <property type="project" value="UniProtKB"/>
</dbReference>
<dbReference type="GO" id="GO:0003129">
    <property type="term" value="P:heart induction"/>
    <property type="evidence" value="ECO:0000250"/>
    <property type="project" value="UniProtKB"/>
</dbReference>
<dbReference type="GO" id="GO:0060426">
    <property type="term" value="P:lung vasculature development"/>
    <property type="evidence" value="ECO:0000250"/>
    <property type="project" value="UniProtKB"/>
</dbReference>
<dbReference type="GO" id="GO:0048762">
    <property type="term" value="P:mesenchymal cell differentiation"/>
    <property type="evidence" value="ECO:0000250"/>
    <property type="project" value="UniProtKB"/>
</dbReference>
<dbReference type="GO" id="GO:2000726">
    <property type="term" value="P:negative regulation of cardiac muscle cell differentiation"/>
    <property type="evidence" value="ECO:0000250"/>
    <property type="project" value="UniProtKB"/>
</dbReference>
<dbReference type="GO" id="GO:0045786">
    <property type="term" value="P:negative regulation of cell cycle"/>
    <property type="evidence" value="ECO:0000250"/>
    <property type="project" value="UniProtKB"/>
</dbReference>
<dbReference type="GO" id="GO:0008285">
    <property type="term" value="P:negative regulation of cell population proliferation"/>
    <property type="evidence" value="ECO:0000250"/>
    <property type="project" value="UniProtKB"/>
</dbReference>
<dbReference type="GO" id="GO:0045892">
    <property type="term" value="P:negative regulation of DNA-templated transcription"/>
    <property type="evidence" value="ECO:0000250"/>
    <property type="project" value="UniProtKB"/>
</dbReference>
<dbReference type="GO" id="GO:0000122">
    <property type="term" value="P:negative regulation of transcription by RNA polymerase II"/>
    <property type="evidence" value="ECO:0000250"/>
    <property type="project" value="UniProtKB"/>
</dbReference>
<dbReference type="GO" id="GO:0001649">
    <property type="term" value="P:osteoblast differentiation"/>
    <property type="evidence" value="ECO:0000250"/>
    <property type="project" value="UniProtKB"/>
</dbReference>
<dbReference type="GO" id="GO:0043065">
    <property type="term" value="P:positive regulation of apoptotic process"/>
    <property type="evidence" value="ECO:0000250"/>
    <property type="project" value="UniProtKB"/>
</dbReference>
<dbReference type="GO" id="GO:0030501">
    <property type="term" value="P:positive regulation of bone mineralization"/>
    <property type="evidence" value="ECO:0000250"/>
    <property type="project" value="UniProtKB"/>
</dbReference>
<dbReference type="GO" id="GO:1900159">
    <property type="term" value="P:positive regulation of bone mineralization involved in bone maturation"/>
    <property type="evidence" value="ECO:0000250"/>
    <property type="project" value="UniProtKB"/>
</dbReference>
<dbReference type="GO" id="GO:0061036">
    <property type="term" value="P:positive regulation of cartilage development"/>
    <property type="evidence" value="ECO:0000250"/>
    <property type="project" value="UniProtKB"/>
</dbReference>
<dbReference type="GO" id="GO:1901331">
    <property type="term" value="P:positive regulation of odontoblast differentiation"/>
    <property type="evidence" value="ECO:0000250"/>
    <property type="project" value="UniProtKB"/>
</dbReference>
<dbReference type="GO" id="GO:0045778">
    <property type="term" value="P:positive regulation of ossification"/>
    <property type="evidence" value="ECO:0000250"/>
    <property type="project" value="UniProtKB"/>
</dbReference>
<dbReference type="GO" id="GO:0010922">
    <property type="term" value="P:positive regulation of phosphatase activity"/>
    <property type="evidence" value="ECO:0000250"/>
    <property type="project" value="UniProtKB"/>
</dbReference>
<dbReference type="GO" id="GO:0001934">
    <property type="term" value="P:positive regulation of protein phosphorylation"/>
    <property type="evidence" value="ECO:0000250"/>
    <property type="project" value="UniProtKB"/>
</dbReference>
<dbReference type="GO" id="GO:0060391">
    <property type="term" value="P:positive regulation of SMAD protein signal transduction"/>
    <property type="evidence" value="ECO:0000250"/>
    <property type="project" value="UniProtKB"/>
</dbReference>
<dbReference type="GO" id="GO:0045944">
    <property type="term" value="P:positive regulation of transcription by RNA polymerase II"/>
    <property type="evidence" value="ECO:0000250"/>
    <property type="project" value="UniProtKB"/>
</dbReference>
<dbReference type="GO" id="GO:0021537">
    <property type="term" value="P:telencephalon development"/>
    <property type="evidence" value="ECO:0000250"/>
    <property type="project" value="UniProtKB"/>
</dbReference>
<dbReference type="CDD" id="cd19390">
    <property type="entry name" value="TGF_beta_BMP2"/>
    <property type="match status" value="1"/>
</dbReference>
<dbReference type="FunFam" id="2.10.90.10:FF:000103">
    <property type="entry name" value="Bone morphogenetic protein 16"/>
    <property type="match status" value="1"/>
</dbReference>
<dbReference type="FunFam" id="2.60.120.970:FF:000009">
    <property type="entry name" value="bone morphogenetic protein 2"/>
    <property type="match status" value="1"/>
</dbReference>
<dbReference type="Gene3D" id="2.60.120.970">
    <property type="match status" value="1"/>
</dbReference>
<dbReference type="Gene3D" id="2.10.90.10">
    <property type="entry name" value="Cystine-knot cytokines"/>
    <property type="match status" value="1"/>
</dbReference>
<dbReference type="InterPro" id="IPR047953">
    <property type="entry name" value="BMP2_TGF_beta-like"/>
</dbReference>
<dbReference type="InterPro" id="IPR029034">
    <property type="entry name" value="Cystine-knot_cytokine"/>
</dbReference>
<dbReference type="InterPro" id="IPR001839">
    <property type="entry name" value="TGF-b_C"/>
</dbReference>
<dbReference type="InterPro" id="IPR001111">
    <property type="entry name" value="TGF-b_propeptide"/>
</dbReference>
<dbReference type="InterPro" id="IPR015615">
    <property type="entry name" value="TGF-beta-rel"/>
</dbReference>
<dbReference type="InterPro" id="IPR017948">
    <property type="entry name" value="TGFb_CS"/>
</dbReference>
<dbReference type="PANTHER" id="PTHR11848:SF143">
    <property type="entry name" value="BONE MORPHOGENETIC PROTEIN 2"/>
    <property type="match status" value="1"/>
</dbReference>
<dbReference type="PANTHER" id="PTHR11848">
    <property type="entry name" value="TGF-BETA FAMILY"/>
    <property type="match status" value="1"/>
</dbReference>
<dbReference type="Pfam" id="PF00019">
    <property type="entry name" value="TGF_beta"/>
    <property type="match status" value="1"/>
</dbReference>
<dbReference type="Pfam" id="PF00688">
    <property type="entry name" value="TGFb_propeptide"/>
    <property type="match status" value="1"/>
</dbReference>
<dbReference type="PRINTS" id="PR00669">
    <property type="entry name" value="INHIBINA"/>
</dbReference>
<dbReference type="SMART" id="SM00204">
    <property type="entry name" value="TGFB"/>
    <property type="match status" value="1"/>
</dbReference>
<dbReference type="SUPFAM" id="SSF57501">
    <property type="entry name" value="Cystine-knot cytokines"/>
    <property type="match status" value="1"/>
</dbReference>
<dbReference type="PROSITE" id="PS00250">
    <property type="entry name" value="TGF_BETA_1"/>
    <property type="match status" value="1"/>
</dbReference>
<dbReference type="PROSITE" id="PS51362">
    <property type="entry name" value="TGF_BETA_2"/>
    <property type="match status" value="1"/>
</dbReference>
<accession>O46564</accession>
<evidence type="ECO:0000250" key="1"/>
<evidence type="ECO:0000250" key="2">
    <source>
        <dbReference type="UniProtKB" id="P12643"/>
    </source>
</evidence>
<evidence type="ECO:0000250" key="3">
    <source>
        <dbReference type="UniProtKB" id="P12644"/>
    </source>
</evidence>
<evidence type="ECO:0000250" key="4">
    <source>
        <dbReference type="UniProtKB" id="P21274"/>
    </source>
</evidence>
<evidence type="ECO:0000255" key="5"/>
<evidence type="ECO:0000256" key="6">
    <source>
        <dbReference type="SAM" id="MobiDB-lite"/>
    </source>
</evidence>
<evidence type="ECO:0000305" key="7"/>
<gene>
    <name type="primary">BMP2</name>
    <name type="synonym">BMP-2</name>
</gene>
<proteinExistence type="evidence at transcript level"/>
<protein>
    <recommendedName>
        <fullName>Bone morphogenetic protein 2</fullName>
        <shortName>BMP-2</shortName>
    </recommendedName>
</protein>
<name>BMP2_RABIT</name>
<sequence>MVAGTRCLLALLLPQVLLGGAAGLIPELGRRKFAASSGRPSPQPSDDILSEFELRLLSMFGLKQRPTPSRDAVVPPYMLDLYRRHSGQPGAPAPDHRLERAASRANTVRSFHHEESLEELPETSGKTTRRFFFNLTSIPPEEFITSAELQVFREQMQEALGDDSGFHHRINIYEIIKPATANSKFPATRLLDTRLVNQNTSRWESFDVTPAVMRWTAQGHANHGFVVEVTHLEEKQGVSKRHVRISRSLHPDEHSWSQIRPLLVTFGHDGKGHPLHRREKRQAKHKQRKRLKSSCKRHPLYVDFSDVGWNDWIVAPPGYHAFYCHGECPFPLADHLNSTNHAIVQTLVNSVNSKIPKACCVPTELSAISMLYLDENEKVVLKNYQDMVVEGCGCR</sequence>
<keyword id="KW-0891">Chondrogenesis</keyword>
<keyword id="KW-0165">Cleavage on pair of basic residues</keyword>
<keyword id="KW-0202">Cytokine</keyword>
<keyword id="KW-0217">Developmental protein</keyword>
<keyword id="KW-0221">Differentiation</keyword>
<keyword id="KW-1015">Disulfide bond</keyword>
<keyword id="KW-0325">Glycoprotein</keyword>
<keyword id="KW-0339">Growth factor</keyword>
<keyword id="KW-0892">Osteogenesis</keyword>
<keyword id="KW-0597">Phosphoprotein</keyword>
<keyword id="KW-1185">Reference proteome</keyword>
<keyword id="KW-0964">Secreted</keyword>
<keyword id="KW-0732">Signal</keyword>
<organism>
    <name type="scientific">Oryctolagus cuniculus</name>
    <name type="common">Rabbit</name>
    <dbReference type="NCBI Taxonomy" id="9986"/>
    <lineage>
        <taxon>Eukaryota</taxon>
        <taxon>Metazoa</taxon>
        <taxon>Chordata</taxon>
        <taxon>Craniata</taxon>
        <taxon>Vertebrata</taxon>
        <taxon>Euteleostomi</taxon>
        <taxon>Mammalia</taxon>
        <taxon>Eutheria</taxon>
        <taxon>Euarchontoglires</taxon>
        <taxon>Glires</taxon>
        <taxon>Lagomorpha</taxon>
        <taxon>Leporidae</taxon>
        <taxon>Oryctolagus</taxon>
    </lineage>
</organism>
<reference key="1">
    <citation type="submission" date="1998-01" db="EMBL/GenBank/DDBJ databases">
        <title>Cloning and expression of BMP-2/-4 from rabbit ocular ciliary epithelium.</title>
        <authorList>
            <person name="Wan X.L."/>
            <person name="Sears J."/>
            <person name="Chen S."/>
            <person name="Sears M."/>
        </authorList>
    </citation>
    <scope>NUCLEOTIDE SEQUENCE [MRNA]</scope>
    <source>
        <strain>New Zealand white</strain>
        <tissue>Ocular ciliary epithelium</tissue>
    </source>
</reference>
<comment type="function">
    <text evidence="2 4">Growth factor of the TGF-beta superfamily that plays essential roles in many developmental processes, including cardiogenesis, neurogenesis, and osteogenesis. Induces cartilage and bone formation. Initiates the canonical BMP signaling cascade by associating with type I receptor BMPR1A and type II receptor BMPR2. Once all three components are bound together in a complex at the cell surface, BMPR2 phosphorylates and activates BMPR1A. In turn, BMPR1A propagates signal by phosphorylating SMAD1/5/8 that travel to the nucleus and act as activators and repressors of transcription of target genes. Also acts to promote expression of HAMP, via the interaction with its receptor BMPR1A/ALK3 (By similarity). Can also signal through non-canonical pathways such as ERK/MAP kinase signaling cascade that regulates osteoblast differentiation. Also stimulates the differentiation of myoblasts into osteoblasts via the EIF2AK3-EIF2A-ATF4 pathway by stimulating EIF2A phosphorylation which leads to increased expression of ATF4 which plays a central role in osteoblast differentiation. Acts as a positive regulator of odontoblast differentiation during mesenchymal tooth germ formation, expression is repressed during the bell stage by MSX1-mediated inhibition of CTNNB1 signaling (By similarity).</text>
</comment>
<comment type="subunit">
    <text evidence="2 4">Homodimer; disulfide-linked. Interacts with SOSTDC1 (By similarity). Interacts with GREM2, RGMA, RGMB and RGMC. Interacts with ASPN (By similarity). Interacts with MAFP5 (By similarity). Interacts with FBN1 (via N-terminal domain) and FBN2. Interacts with type I receptor BMPR1A. Interacts with type II receptor BMPR2 (By similarity). Interacts with SCUBE3 (By similarity). Interacts with TNFAIP6 (primarily via Link domain); this interaction is inhibited by hyaluronan. Interacts with ERFE (By similarity). Interacts with BMPR1A/ALK3; the interaction may induce HAMP expression (By similarity). Forms heterodimers with BMP6 in vitro; the heterodimer then binds to its receptor BMPR1A /ALK3 and may induce HAMP expression (By similarity). Interacts with TGFBR3 (By similarity).</text>
</comment>
<comment type="subcellular location">
    <subcellularLocation>
        <location evidence="2">Secreted</location>
    </subcellularLocation>
</comment>
<comment type="similarity">
    <text evidence="7">Belongs to the TGF-beta family.</text>
</comment>
<feature type="signal peptide" evidence="5">
    <location>
        <begin position="1"/>
        <end position="23"/>
    </location>
</feature>
<feature type="propeptide" id="PRO_0000033828" description="Cleaved by PCSK5" evidence="1">
    <location>
        <begin position="24"/>
        <end position="281"/>
    </location>
</feature>
<feature type="chain" id="PRO_0000033829" description="Bone morphogenetic protein 2">
    <location>
        <begin position="282"/>
        <end position="395"/>
    </location>
</feature>
<feature type="region of interest" description="Disordered" evidence="6">
    <location>
        <begin position="270"/>
        <end position="292"/>
    </location>
</feature>
<feature type="compositionally biased region" description="Basic residues" evidence="6">
    <location>
        <begin position="273"/>
        <end position="292"/>
    </location>
</feature>
<feature type="modified residue" description="Phosphoserine" evidence="3">
    <location>
        <position position="86"/>
    </location>
</feature>
<feature type="glycosylation site" description="N-linked (GlcNAc...) asparagine" evidence="5">
    <location>
        <position position="134"/>
    </location>
</feature>
<feature type="glycosylation site" description="N-linked (GlcNAc...) asparagine" evidence="5">
    <location>
        <position position="199"/>
    </location>
</feature>
<feature type="glycosylation site" description="N-linked (GlcNAc...) asparagine" evidence="5">
    <location>
        <position position="337"/>
    </location>
</feature>
<feature type="disulfide bond" evidence="1">
    <location>
        <begin position="295"/>
        <end position="360"/>
    </location>
</feature>
<feature type="disulfide bond" evidence="1">
    <location>
        <begin position="324"/>
        <end position="392"/>
    </location>
</feature>
<feature type="disulfide bond" evidence="1">
    <location>
        <begin position="328"/>
        <end position="394"/>
    </location>
</feature>
<feature type="disulfide bond" description="Interchain" evidence="1">
    <location>
        <position position="359"/>
    </location>
</feature>